<protein>
    <recommendedName>
        <fullName>Uncharacterized protein MT0662.1</fullName>
    </recommendedName>
</protein>
<keyword id="KW-1185">Reference proteome</keyword>
<dbReference type="EMBL" id="AE000516">
    <property type="protein sequence ID" value="AAK44887.1"/>
    <property type="molecule type" value="Genomic_DNA"/>
</dbReference>
<dbReference type="SMR" id="P9WKS4"/>
<dbReference type="KEGG" id="mtc:MT0662.1"/>
<dbReference type="PATRIC" id="fig|83331.31.peg.703"/>
<dbReference type="HOGENOM" id="CLU_204581_0_0_11"/>
<dbReference type="Proteomes" id="UP000001020">
    <property type="component" value="Chromosome"/>
</dbReference>
<dbReference type="InterPro" id="IPR019239">
    <property type="entry name" value="VapB_antitoxin"/>
</dbReference>
<dbReference type="Pfam" id="PF09957">
    <property type="entry name" value="VapB_antitoxin"/>
    <property type="match status" value="1"/>
</dbReference>
<gene>
    <name type="ordered locus">MT0662.1</name>
</gene>
<name>Y634A_MYCTO</name>
<accession>P9WKS4</accession>
<accession>L0T4F4</accession>
<accession>Q79FY1</accession>
<accession>Q8VKH3</accession>
<evidence type="ECO:0000256" key="1">
    <source>
        <dbReference type="SAM" id="MobiDB-lite"/>
    </source>
</evidence>
<sequence length="83" mass="9426">MGSDCGCGGYLWSMLKRVEIEVDDDLIQKVIRRYRVKGAREAVNLALRTLLGEADTAEHGHDDEYDEFSDPNAWVPRRSRDTG</sequence>
<feature type="chain" id="PRO_0000427603" description="Uncharacterized protein MT0662.1">
    <location>
        <begin position="1"/>
        <end position="83"/>
    </location>
</feature>
<feature type="region of interest" description="Disordered" evidence="1">
    <location>
        <begin position="58"/>
        <end position="83"/>
    </location>
</feature>
<organism>
    <name type="scientific">Mycobacterium tuberculosis (strain CDC 1551 / Oshkosh)</name>
    <dbReference type="NCBI Taxonomy" id="83331"/>
    <lineage>
        <taxon>Bacteria</taxon>
        <taxon>Bacillati</taxon>
        <taxon>Actinomycetota</taxon>
        <taxon>Actinomycetes</taxon>
        <taxon>Mycobacteriales</taxon>
        <taxon>Mycobacteriaceae</taxon>
        <taxon>Mycobacterium</taxon>
        <taxon>Mycobacterium tuberculosis complex</taxon>
    </lineage>
</organism>
<proteinExistence type="predicted"/>
<reference key="1">
    <citation type="journal article" date="2002" name="J. Bacteriol.">
        <title>Whole-genome comparison of Mycobacterium tuberculosis clinical and laboratory strains.</title>
        <authorList>
            <person name="Fleischmann R.D."/>
            <person name="Alland D."/>
            <person name="Eisen J.A."/>
            <person name="Carpenter L."/>
            <person name="White O."/>
            <person name="Peterson J.D."/>
            <person name="DeBoy R.T."/>
            <person name="Dodson R.J."/>
            <person name="Gwinn M.L."/>
            <person name="Haft D.H."/>
            <person name="Hickey E.K."/>
            <person name="Kolonay J.F."/>
            <person name="Nelson W.C."/>
            <person name="Umayam L.A."/>
            <person name="Ermolaeva M.D."/>
            <person name="Salzberg S.L."/>
            <person name="Delcher A."/>
            <person name="Utterback T.R."/>
            <person name="Weidman J.F."/>
            <person name="Khouri H.M."/>
            <person name="Gill J."/>
            <person name="Mikula A."/>
            <person name="Bishai W."/>
            <person name="Jacobs W.R. Jr."/>
            <person name="Venter J.C."/>
            <person name="Fraser C.M."/>
        </authorList>
    </citation>
    <scope>NUCLEOTIDE SEQUENCE [LARGE SCALE GENOMIC DNA]</scope>
    <source>
        <strain>CDC 1551 / Oshkosh</strain>
    </source>
</reference>